<evidence type="ECO:0000250" key="1">
    <source>
        <dbReference type="UniProtKB" id="P48651"/>
    </source>
</evidence>
<evidence type="ECO:0000250" key="2">
    <source>
        <dbReference type="UniProtKB" id="Q99LH2"/>
    </source>
</evidence>
<evidence type="ECO:0000255" key="3"/>
<evidence type="ECO:0000256" key="4">
    <source>
        <dbReference type="SAM" id="MobiDB-lite"/>
    </source>
</evidence>
<evidence type="ECO:0000305" key="5"/>
<gene>
    <name type="primary">ptdss1</name>
    <name type="ORF">si:ch211-269k10</name>
    <name type="ORF">zgc:55906</name>
</gene>
<comment type="function">
    <text evidence="1">Catalyzes a base-exchange reaction in which the polar head group of phosphatidylethanolamine (PE) or phosphatidylcholine (PC) is replaced by L-serine (By similarity). Catalyzes mainly the conversion of phosphatidylcholine but also converts, in vitro and to a lesser extent, phosphatidylethanolamine (By similarity).</text>
</comment>
<comment type="catalytic activity">
    <reaction evidence="1">
        <text>a 1,2-diacyl-sn-glycero-3-phosphoethanolamine + L-serine = a 1,2-diacyl-sn-glycero-3-phospho-L-serine + ethanolamine</text>
        <dbReference type="Rhea" id="RHEA:27606"/>
        <dbReference type="ChEBI" id="CHEBI:33384"/>
        <dbReference type="ChEBI" id="CHEBI:57262"/>
        <dbReference type="ChEBI" id="CHEBI:57603"/>
        <dbReference type="ChEBI" id="CHEBI:64612"/>
        <dbReference type="EC" id="2.7.8.29"/>
    </reaction>
    <physiologicalReaction direction="left-to-right" evidence="1">
        <dbReference type="Rhea" id="RHEA:27607"/>
    </physiologicalReaction>
</comment>
<comment type="catalytic activity">
    <reaction evidence="1">
        <text>a 1,2-diacyl-sn-glycero-3-phosphocholine + L-serine = a 1,2-diacyl-sn-glycero-3-phospho-L-serine + choline</text>
        <dbReference type="Rhea" id="RHEA:45088"/>
        <dbReference type="ChEBI" id="CHEBI:15354"/>
        <dbReference type="ChEBI" id="CHEBI:33384"/>
        <dbReference type="ChEBI" id="CHEBI:57262"/>
        <dbReference type="ChEBI" id="CHEBI:57643"/>
    </reaction>
    <physiologicalReaction direction="left-to-right" evidence="1">
        <dbReference type="Rhea" id="RHEA:45089"/>
    </physiologicalReaction>
</comment>
<comment type="pathway">
    <text>Phospholipid metabolism; phosphatidylserine biosynthesis.</text>
</comment>
<comment type="subcellular location">
    <subcellularLocation>
        <location evidence="2">Endoplasmic reticulum membrane</location>
        <topology evidence="2">Multi-pass membrane protein</topology>
    </subcellularLocation>
    <text evidence="2">Highly enriched in the mitochondria-associated membrane (MAM).</text>
</comment>
<comment type="similarity">
    <text evidence="5">Belongs to the phosphatidyl serine synthase family.</text>
</comment>
<proteinExistence type="evidence at transcript level"/>
<dbReference type="EC" id="2.7.8.29" evidence="1"/>
<dbReference type="EMBL" id="CR848746">
    <property type="status" value="NOT_ANNOTATED_CDS"/>
    <property type="molecule type" value="Genomic_DNA"/>
</dbReference>
<dbReference type="EMBL" id="BC044533">
    <property type="protein sequence ID" value="AAH44533.1"/>
    <property type="molecule type" value="mRNA"/>
</dbReference>
<dbReference type="RefSeq" id="NP_957250.1">
    <property type="nucleotide sequence ID" value="NM_200956.1"/>
</dbReference>
<dbReference type="SMR" id="Q803C9"/>
<dbReference type="FunCoup" id="Q803C9">
    <property type="interactions" value="1121"/>
</dbReference>
<dbReference type="STRING" id="7955.ENSDARP00000026303"/>
<dbReference type="PaxDb" id="7955-ENSDARP00000026303"/>
<dbReference type="Ensembl" id="ENSDART00000010792">
    <property type="protein sequence ID" value="ENSDARP00000026303"/>
    <property type="gene ID" value="ENSDARG00000012588"/>
</dbReference>
<dbReference type="GeneID" id="393931"/>
<dbReference type="KEGG" id="dre:393931"/>
<dbReference type="AGR" id="ZFIN:ZDB-GENE-040426-837"/>
<dbReference type="CTD" id="393931"/>
<dbReference type="ZFIN" id="ZDB-GENE-040426-837">
    <property type="gene designation" value="ptdss1a"/>
</dbReference>
<dbReference type="eggNOG" id="KOG2735">
    <property type="taxonomic scope" value="Eukaryota"/>
</dbReference>
<dbReference type="HOGENOM" id="CLU_037661_3_0_1"/>
<dbReference type="InParanoid" id="Q803C9"/>
<dbReference type="OMA" id="YMENCNS"/>
<dbReference type="OrthoDB" id="10265393at2759"/>
<dbReference type="PhylomeDB" id="Q803C9"/>
<dbReference type="TreeFam" id="TF300012"/>
<dbReference type="Reactome" id="R-DRE-1483101">
    <property type="pathway name" value="Synthesis of PS"/>
</dbReference>
<dbReference type="UniPathway" id="UPA00948"/>
<dbReference type="PRO" id="PR:Q803C9"/>
<dbReference type="Proteomes" id="UP000000437">
    <property type="component" value="Chromosome 16"/>
</dbReference>
<dbReference type="Bgee" id="ENSDARG00000012588">
    <property type="expression patterns" value="Expressed in mature ovarian follicle and 28 other cell types or tissues"/>
</dbReference>
<dbReference type="GO" id="GO:0005789">
    <property type="term" value="C:endoplasmic reticulum membrane"/>
    <property type="evidence" value="ECO:0007669"/>
    <property type="project" value="UniProtKB-SubCell"/>
</dbReference>
<dbReference type="GO" id="GO:0106258">
    <property type="term" value="F:L-serine-phosphatidylcholine phosphatidyltransferase activity"/>
    <property type="evidence" value="ECO:0007669"/>
    <property type="project" value="RHEA"/>
</dbReference>
<dbReference type="GO" id="GO:0106245">
    <property type="term" value="F:L-serine-phosphatidylethanolamine phosphatidyltransferase activity"/>
    <property type="evidence" value="ECO:0007669"/>
    <property type="project" value="UniProtKB-EC"/>
</dbReference>
<dbReference type="GO" id="GO:0006659">
    <property type="term" value="P:phosphatidylserine biosynthetic process"/>
    <property type="evidence" value="ECO:0007669"/>
    <property type="project" value="UniProtKB-UniPathway"/>
</dbReference>
<dbReference type="InterPro" id="IPR004277">
    <property type="entry name" value="PSS"/>
</dbReference>
<dbReference type="PANTHER" id="PTHR15362">
    <property type="entry name" value="PHOSPHATIDYLINOSITOL SYNTHASE"/>
    <property type="match status" value="1"/>
</dbReference>
<dbReference type="PANTHER" id="PTHR15362:SF32">
    <property type="entry name" value="PHOSPHATIDYLSERINE SYNTHASE 1"/>
    <property type="match status" value="1"/>
</dbReference>
<dbReference type="Pfam" id="PF03034">
    <property type="entry name" value="PSS"/>
    <property type="match status" value="1"/>
</dbReference>
<keyword id="KW-0256">Endoplasmic reticulum</keyword>
<keyword id="KW-0444">Lipid biosynthesis</keyword>
<keyword id="KW-0443">Lipid metabolism</keyword>
<keyword id="KW-0472">Membrane</keyword>
<keyword id="KW-0594">Phospholipid biosynthesis</keyword>
<keyword id="KW-1208">Phospholipid metabolism</keyword>
<keyword id="KW-1185">Reference proteome</keyword>
<keyword id="KW-0808">Transferase</keyword>
<keyword id="KW-0812">Transmembrane</keyword>
<keyword id="KW-1133">Transmembrane helix</keyword>
<feature type="chain" id="PRO_0000416032" description="Phosphatidylserine synthase 1">
    <location>
        <begin position="1"/>
        <end position="465"/>
    </location>
</feature>
<feature type="topological domain" description="Cytoplasmic" evidence="3">
    <location>
        <begin position="1"/>
        <end position="35"/>
    </location>
</feature>
<feature type="transmembrane region" description="Helical" evidence="3">
    <location>
        <begin position="36"/>
        <end position="56"/>
    </location>
</feature>
<feature type="topological domain" description="Lumenal" evidence="3">
    <location>
        <begin position="57"/>
        <end position="70"/>
    </location>
</feature>
<feature type="transmembrane region" description="Helical" evidence="3">
    <location>
        <begin position="71"/>
        <end position="91"/>
    </location>
</feature>
<feature type="topological domain" description="Cytoplasmic" evidence="3">
    <location>
        <begin position="92"/>
        <end position="102"/>
    </location>
</feature>
<feature type="transmembrane region" description="Helical" evidence="3">
    <location>
        <begin position="103"/>
        <end position="123"/>
    </location>
</feature>
<feature type="topological domain" description="Lumenal" evidence="3">
    <location>
        <begin position="124"/>
        <end position="286"/>
    </location>
</feature>
<feature type="transmembrane region" description="Helical" evidence="3">
    <location>
        <begin position="287"/>
        <end position="307"/>
    </location>
</feature>
<feature type="topological domain" description="Cytoplasmic" evidence="3">
    <location>
        <begin position="308"/>
        <end position="309"/>
    </location>
</feature>
<feature type="transmembrane region" description="Helical" evidence="3">
    <location>
        <begin position="310"/>
        <end position="330"/>
    </location>
</feature>
<feature type="topological domain" description="Lumenal" evidence="3">
    <location>
        <begin position="331"/>
        <end position="355"/>
    </location>
</feature>
<feature type="transmembrane region" description="Helical" evidence="3">
    <location>
        <begin position="356"/>
        <end position="376"/>
    </location>
</feature>
<feature type="topological domain" description="Cytoplasmic" evidence="3">
    <location>
        <begin position="377"/>
        <end position="380"/>
    </location>
</feature>
<feature type="transmembrane region" description="Helical" evidence="3">
    <location>
        <begin position="381"/>
        <end position="401"/>
    </location>
</feature>
<feature type="topological domain" description="Lumenal" evidence="3">
    <location>
        <begin position="402"/>
        <end position="465"/>
    </location>
</feature>
<feature type="region of interest" description="Disordered" evidence="4">
    <location>
        <begin position="446"/>
        <end position="465"/>
    </location>
</feature>
<feature type="sequence conflict" description="In Ref. 2; AAH44533." evidence="5" ref="2">
    <original>K</original>
    <variation>R</variation>
    <location>
        <position position="308"/>
    </location>
</feature>
<organism>
    <name type="scientific">Danio rerio</name>
    <name type="common">Zebrafish</name>
    <name type="synonym">Brachydanio rerio</name>
    <dbReference type="NCBI Taxonomy" id="7955"/>
    <lineage>
        <taxon>Eukaryota</taxon>
        <taxon>Metazoa</taxon>
        <taxon>Chordata</taxon>
        <taxon>Craniata</taxon>
        <taxon>Vertebrata</taxon>
        <taxon>Euteleostomi</taxon>
        <taxon>Actinopterygii</taxon>
        <taxon>Neopterygii</taxon>
        <taxon>Teleostei</taxon>
        <taxon>Ostariophysi</taxon>
        <taxon>Cypriniformes</taxon>
        <taxon>Danionidae</taxon>
        <taxon>Danioninae</taxon>
        <taxon>Danio</taxon>
    </lineage>
</organism>
<sequence>MATTFRSQTLSKDDVNYRMHFRMINEQQVEDITIQFFYKPHTISLLTVTVLSLMYFAFTRDDGDPDSNLRVGLILLVSFFLVISVLAFPNGPFTRPHPAIWRIVFGLSVLYFLFLVFIIFLNWDQVKALMFWLDPNLRYAKREADVMEYAVNCHVITWERILSHFDIFAFSHFWGWGMKALLIRSYGLCWTISITWELTELFFMHLLPNFAECWWDQVILDILLCNGGGIWLGMTVCRFLEMRTYHWASIKDIHSTTGKIKRAVLQFTPASWTYVRWLDPKSSLQRVMGVYLFMIIWQLTELNTFFLKHIFVFPACHALSWCRILFIGIITAPTVRQYYAYLTDTQCKRVGTQCWVFGAIAFLEALACIKFGQDLFSKTQILYVILWLVCLAFITFLCLYVMVWYAENYGPRQKSFSECEDSIYSEAGDSVTECKGEFEIDSTTSCSTRKRRDSGDSRTINGMEK</sequence>
<reference key="1">
    <citation type="journal article" date="2013" name="Nature">
        <title>The zebrafish reference genome sequence and its relationship to the human genome.</title>
        <authorList>
            <person name="Howe K."/>
            <person name="Clark M.D."/>
            <person name="Torroja C.F."/>
            <person name="Torrance J."/>
            <person name="Berthelot C."/>
            <person name="Muffato M."/>
            <person name="Collins J.E."/>
            <person name="Humphray S."/>
            <person name="McLaren K."/>
            <person name="Matthews L."/>
            <person name="McLaren S."/>
            <person name="Sealy I."/>
            <person name="Caccamo M."/>
            <person name="Churcher C."/>
            <person name="Scott C."/>
            <person name="Barrett J.C."/>
            <person name="Koch R."/>
            <person name="Rauch G.J."/>
            <person name="White S."/>
            <person name="Chow W."/>
            <person name="Kilian B."/>
            <person name="Quintais L.T."/>
            <person name="Guerra-Assuncao J.A."/>
            <person name="Zhou Y."/>
            <person name="Gu Y."/>
            <person name="Yen J."/>
            <person name="Vogel J.H."/>
            <person name="Eyre T."/>
            <person name="Redmond S."/>
            <person name="Banerjee R."/>
            <person name="Chi J."/>
            <person name="Fu B."/>
            <person name="Langley E."/>
            <person name="Maguire S.F."/>
            <person name="Laird G.K."/>
            <person name="Lloyd D."/>
            <person name="Kenyon E."/>
            <person name="Donaldson S."/>
            <person name="Sehra H."/>
            <person name="Almeida-King J."/>
            <person name="Loveland J."/>
            <person name="Trevanion S."/>
            <person name="Jones M."/>
            <person name="Quail M."/>
            <person name="Willey D."/>
            <person name="Hunt A."/>
            <person name="Burton J."/>
            <person name="Sims S."/>
            <person name="McLay K."/>
            <person name="Plumb B."/>
            <person name="Davis J."/>
            <person name="Clee C."/>
            <person name="Oliver K."/>
            <person name="Clark R."/>
            <person name="Riddle C."/>
            <person name="Elliot D."/>
            <person name="Threadgold G."/>
            <person name="Harden G."/>
            <person name="Ware D."/>
            <person name="Begum S."/>
            <person name="Mortimore B."/>
            <person name="Kerry G."/>
            <person name="Heath P."/>
            <person name="Phillimore B."/>
            <person name="Tracey A."/>
            <person name="Corby N."/>
            <person name="Dunn M."/>
            <person name="Johnson C."/>
            <person name="Wood J."/>
            <person name="Clark S."/>
            <person name="Pelan S."/>
            <person name="Griffiths G."/>
            <person name="Smith M."/>
            <person name="Glithero R."/>
            <person name="Howden P."/>
            <person name="Barker N."/>
            <person name="Lloyd C."/>
            <person name="Stevens C."/>
            <person name="Harley J."/>
            <person name="Holt K."/>
            <person name="Panagiotidis G."/>
            <person name="Lovell J."/>
            <person name="Beasley H."/>
            <person name="Henderson C."/>
            <person name="Gordon D."/>
            <person name="Auger K."/>
            <person name="Wright D."/>
            <person name="Collins J."/>
            <person name="Raisen C."/>
            <person name="Dyer L."/>
            <person name="Leung K."/>
            <person name="Robertson L."/>
            <person name="Ambridge K."/>
            <person name="Leongamornlert D."/>
            <person name="McGuire S."/>
            <person name="Gilderthorp R."/>
            <person name="Griffiths C."/>
            <person name="Manthravadi D."/>
            <person name="Nichol S."/>
            <person name="Barker G."/>
            <person name="Whitehead S."/>
            <person name="Kay M."/>
            <person name="Brown J."/>
            <person name="Murnane C."/>
            <person name="Gray E."/>
            <person name="Humphries M."/>
            <person name="Sycamore N."/>
            <person name="Barker D."/>
            <person name="Saunders D."/>
            <person name="Wallis J."/>
            <person name="Babbage A."/>
            <person name="Hammond S."/>
            <person name="Mashreghi-Mohammadi M."/>
            <person name="Barr L."/>
            <person name="Martin S."/>
            <person name="Wray P."/>
            <person name="Ellington A."/>
            <person name="Matthews N."/>
            <person name="Ellwood M."/>
            <person name="Woodmansey R."/>
            <person name="Clark G."/>
            <person name="Cooper J."/>
            <person name="Tromans A."/>
            <person name="Grafham D."/>
            <person name="Skuce C."/>
            <person name="Pandian R."/>
            <person name="Andrews R."/>
            <person name="Harrison E."/>
            <person name="Kimberley A."/>
            <person name="Garnett J."/>
            <person name="Fosker N."/>
            <person name="Hall R."/>
            <person name="Garner P."/>
            <person name="Kelly D."/>
            <person name="Bird C."/>
            <person name="Palmer S."/>
            <person name="Gehring I."/>
            <person name="Berger A."/>
            <person name="Dooley C.M."/>
            <person name="Ersan-Urun Z."/>
            <person name="Eser C."/>
            <person name="Geiger H."/>
            <person name="Geisler M."/>
            <person name="Karotki L."/>
            <person name="Kirn A."/>
            <person name="Konantz J."/>
            <person name="Konantz M."/>
            <person name="Oberlander M."/>
            <person name="Rudolph-Geiger S."/>
            <person name="Teucke M."/>
            <person name="Lanz C."/>
            <person name="Raddatz G."/>
            <person name="Osoegawa K."/>
            <person name="Zhu B."/>
            <person name="Rapp A."/>
            <person name="Widaa S."/>
            <person name="Langford C."/>
            <person name="Yang F."/>
            <person name="Schuster S.C."/>
            <person name="Carter N.P."/>
            <person name="Harrow J."/>
            <person name="Ning Z."/>
            <person name="Herrero J."/>
            <person name="Searle S.M."/>
            <person name="Enright A."/>
            <person name="Geisler R."/>
            <person name="Plasterk R.H."/>
            <person name="Lee C."/>
            <person name="Westerfield M."/>
            <person name="de Jong P.J."/>
            <person name="Zon L.I."/>
            <person name="Postlethwait J.H."/>
            <person name="Nusslein-Volhard C."/>
            <person name="Hubbard T.J."/>
            <person name="Roest Crollius H."/>
            <person name="Rogers J."/>
            <person name="Stemple D.L."/>
        </authorList>
    </citation>
    <scope>NUCLEOTIDE SEQUENCE [LARGE SCALE GENOMIC DNA]</scope>
    <source>
        <strain>Tuebingen</strain>
    </source>
</reference>
<reference key="2">
    <citation type="submission" date="2003-01" db="EMBL/GenBank/DDBJ databases">
        <authorList>
            <consortium name="NIH - Zebrafish Gene Collection (ZGC) project"/>
        </authorList>
    </citation>
    <scope>NUCLEOTIDE SEQUENCE [LARGE SCALE MRNA]</scope>
</reference>
<name>PTSS1_DANRE</name>
<accession>Q803C9</accession>
<accession>F1QQF3</accession>
<protein>
    <recommendedName>
        <fullName>Phosphatidylserine synthase 1</fullName>
        <shortName>PSS-1</shortName>
        <shortName>PtdSer synthase 1</shortName>
        <ecNumber evidence="1">2.7.8.29</ecNumber>
    </recommendedName>
    <alternativeName>
        <fullName>Serine-exchange enzyme I</fullName>
    </alternativeName>
</protein>